<comment type="function">
    <text evidence="1">Part of the Sec protein translocase complex. Interacts with the SecYEG preprotein conducting channel. Has a central role in coupling the hydrolysis of ATP to the transfer of proteins into and across the cell membrane, serving both as a receptor for the preprotein-SecB complex and as an ATP-driven molecular motor driving the stepwise translocation of polypeptide chains across the membrane.</text>
</comment>
<comment type="catalytic activity">
    <reaction evidence="1">
        <text>ATP + H2O + cellular proteinSide 1 = ADP + phosphate + cellular proteinSide 2.</text>
        <dbReference type="EC" id="7.4.2.8"/>
    </reaction>
</comment>
<comment type="cofactor">
    <cofactor evidence="1">
        <name>Zn(2+)</name>
        <dbReference type="ChEBI" id="CHEBI:29105"/>
    </cofactor>
    <text evidence="1">May bind 1 zinc ion per subunit.</text>
</comment>
<comment type="subunit">
    <text evidence="1">Monomer and homodimer. Part of the essential Sec protein translocation apparatus which comprises SecA, SecYEG and auxiliary proteins SecDF-YajC and YidC.</text>
</comment>
<comment type="subcellular location">
    <subcellularLocation>
        <location evidence="1">Cell inner membrane</location>
        <topology evidence="1">Peripheral membrane protein</topology>
        <orientation evidence="1">Cytoplasmic side</orientation>
    </subcellularLocation>
    <subcellularLocation>
        <location evidence="1">Cytoplasm</location>
    </subcellularLocation>
    <text evidence="1">Distribution is 50-50.</text>
</comment>
<comment type="similarity">
    <text evidence="1">Belongs to the SecA family.</text>
</comment>
<accession>Q62GT8</accession>
<dbReference type="EC" id="7.4.2.8" evidence="1"/>
<dbReference type="EMBL" id="CP000010">
    <property type="protein sequence ID" value="AAU50069.1"/>
    <property type="molecule type" value="Genomic_DNA"/>
</dbReference>
<dbReference type="RefSeq" id="WP_004194125.1">
    <property type="nucleotide sequence ID" value="NC_006348.1"/>
</dbReference>
<dbReference type="RefSeq" id="YP_104083.1">
    <property type="nucleotide sequence ID" value="NC_006348.1"/>
</dbReference>
<dbReference type="SMR" id="Q62GT8"/>
<dbReference type="GeneID" id="92980233"/>
<dbReference type="KEGG" id="bma:BMA2540"/>
<dbReference type="PATRIC" id="fig|243160.12.peg.2618"/>
<dbReference type="eggNOG" id="COG0653">
    <property type="taxonomic scope" value="Bacteria"/>
</dbReference>
<dbReference type="HOGENOM" id="CLU_005314_3_0_4"/>
<dbReference type="Proteomes" id="UP000006693">
    <property type="component" value="Chromosome 1"/>
</dbReference>
<dbReference type="GO" id="GO:0031522">
    <property type="term" value="C:cell envelope Sec protein transport complex"/>
    <property type="evidence" value="ECO:0007669"/>
    <property type="project" value="TreeGrafter"/>
</dbReference>
<dbReference type="GO" id="GO:0005829">
    <property type="term" value="C:cytosol"/>
    <property type="evidence" value="ECO:0007669"/>
    <property type="project" value="TreeGrafter"/>
</dbReference>
<dbReference type="GO" id="GO:0005886">
    <property type="term" value="C:plasma membrane"/>
    <property type="evidence" value="ECO:0007669"/>
    <property type="project" value="UniProtKB-SubCell"/>
</dbReference>
<dbReference type="GO" id="GO:0005524">
    <property type="term" value="F:ATP binding"/>
    <property type="evidence" value="ECO:0007669"/>
    <property type="project" value="UniProtKB-UniRule"/>
</dbReference>
<dbReference type="GO" id="GO:0046872">
    <property type="term" value="F:metal ion binding"/>
    <property type="evidence" value="ECO:0007669"/>
    <property type="project" value="UniProtKB-KW"/>
</dbReference>
<dbReference type="GO" id="GO:0008564">
    <property type="term" value="F:protein-exporting ATPase activity"/>
    <property type="evidence" value="ECO:0007669"/>
    <property type="project" value="UniProtKB-EC"/>
</dbReference>
<dbReference type="GO" id="GO:0065002">
    <property type="term" value="P:intracellular protein transmembrane transport"/>
    <property type="evidence" value="ECO:0007669"/>
    <property type="project" value="UniProtKB-UniRule"/>
</dbReference>
<dbReference type="GO" id="GO:0017038">
    <property type="term" value="P:protein import"/>
    <property type="evidence" value="ECO:0007669"/>
    <property type="project" value="InterPro"/>
</dbReference>
<dbReference type="GO" id="GO:0006605">
    <property type="term" value="P:protein targeting"/>
    <property type="evidence" value="ECO:0007669"/>
    <property type="project" value="UniProtKB-UniRule"/>
</dbReference>
<dbReference type="GO" id="GO:0043952">
    <property type="term" value="P:protein transport by the Sec complex"/>
    <property type="evidence" value="ECO:0007669"/>
    <property type="project" value="TreeGrafter"/>
</dbReference>
<dbReference type="CDD" id="cd17928">
    <property type="entry name" value="DEXDc_SecA"/>
    <property type="match status" value="1"/>
</dbReference>
<dbReference type="CDD" id="cd18803">
    <property type="entry name" value="SF2_C_secA"/>
    <property type="match status" value="1"/>
</dbReference>
<dbReference type="FunFam" id="3.40.50.300:FF:000081">
    <property type="entry name" value="Preprotein translocase subunit SecA"/>
    <property type="match status" value="1"/>
</dbReference>
<dbReference type="FunFam" id="3.40.50.300:FF:000113">
    <property type="entry name" value="Preprotein translocase subunit SecA"/>
    <property type="match status" value="1"/>
</dbReference>
<dbReference type="FunFam" id="3.90.1440.10:FF:000001">
    <property type="entry name" value="Preprotein translocase subunit SecA"/>
    <property type="match status" value="1"/>
</dbReference>
<dbReference type="FunFam" id="1.10.3060.10:FF:000003">
    <property type="entry name" value="Protein translocase subunit SecA"/>
    <property type="match status" value="1"/>
</dbReference>
<dbReference type="Gene3D" id="1.10.3060.10">
    <property type="entry name" value="Helical scaffold and wing domains of SecA"/>
    <property type="match status" value="1"/>
</dbReference>
<dbReference type="Gene3D" id="3.40.50.300">
    <property type="entry name" value="P-loop containing nucleotide triphosphate hydrolases"/>
    <property type="match status" value="2"/>
</dbReference>
<dbReference type="Gene3D" id="3.90.1440.10">
    <property type="entry name" value="SecA, preprotein cross-linking domain"/>
    <property type="match status" value="1"/>
</dbReference>
<dbReference type="HAMAP" id="MF_01382">
    <property type="entry name" value="SecA"/>
    <property type="match status" value="1"/>
</dbReference>
<dbReference type="InterPro" id="IPR014001">
    <property type="entry name" value="Helicase_ATP-bd"/>
</dbReference>
<dbReference type="InterPro" id="IPR001650">
    <property type="entry name" value="Helicase_C-like"/>
</dbReference>
<dbReference type="InterPro" id="IPR027417">
    <property type="entry name" value="P-loop_NTPase"/>
</dbReference>
<dbReference type="InterPro" id="IPR004027">
    <property type="entry name" value="SEC_C_motif"/>
</dbReference>
<dbReference type="InterPro" id="IPR000185">
    <property type="entry name" value="SecA"/>
</dbReference>
<dbReference type="InterPro" id="IPR020937">
    <property type="entry name" value="SecA_CS"/>
</dbReference>
<dbReference type="InterPro" id="IPR011115">
    <property type="entry name" value="SecA_DEAD"/>
</dbReference>
<dbReference type="InterPro" id="IPR014018">
    <property type="entry name" value="SecA_motor_DEAD"/>
</dbReference>
<dbReference type="InterPro" id="IPR011130">
    <property type="entry name" value="SecA_preprotein_X-link_dom"/>
</dbReference>
<dbReference type="InterPro" id="IPR044722">
    <property type="entry name" value="SecA_SF2_C"/>
</dbReference>
<dbReference type="InterPro" id="IPR011116">
    <property type="entry name" value="SecA_Wing/Scaffold"/>
</dbReference>
<dbReference type="InterPro" id="IPR036266">
    <property type="entry name" value="SecA_Wing/Scaffold_sf"/>
</dbReference>
<dbReference type="InterPro" id="IPR036670">
    <property type="entry name" value="SecA_X-link_sf"/>
</dbReference>
<dbReference type="NCBIfam" id="NF009538">
    <property type="entry name" value="PRK12904.1"/>
    <property type="match status" value="1"/>
</dbReference>
<dbReference type="NCBIfam" id="TIGR00963">
    <property type="entry name" value="secA"/>
    <property type="match status" value="1"/>
</dbReference>
<dbReference type="PANTHER" id="PTHR30612:SF0">
    <property type="entry name" value="CHLOROPLAST PROTEIN-TRANSPORTING ATPASE"/>
    <property type="match status" value="1"/>
</dbReference>
<dbReference type="PANTHER" id="PTHR30612">
    <property type="entry name" value="SECA INNER MEMBRANE COMPONENT OF SEC PROTEIN SECRETION SYSTEM"/>
    <property type="match status" value="1"/>
</dbReference>
<dbReference type="Pfam" id="PF21090">
    <property type="entry name" value="P-loop_SecA"/>
    <property type="match status" value="1"/>
</dbReference>
<dbReference type="Pfam" id="PF02810">
    <property type="entry name" value="SEC-C"/>
    <property type="match status" value="1"/>
</dbReference>
<dbReference type="Pfam" id="PF07517">
    <property type="entry name" value="SecA_DEAD"/>
    <property type="match status" value="1"/>
</dbReference>
<dbReference type="Pfam" id="PF01043">
    <property type="entry name" value="SecA_PP_bind"/>
    <property type="match status" value="1"/>
</dbReference>
<dbReference type="Pfam" id="PF07516">
    <property type="entry name" value="SecA_SW"/>
    <property type="match status" value="1"/>
</dbReference>
<dbReference type="PRINTS" id="PR00906">
    <property type="entry name" value="SECA"/>
</dbReference>
<dbReference type="SMART" id="SM00957">
    <property type="entry name" value="SecA_DEAD"/>
    <property type="match status" value="1"/>
</dbReference>
<dbReference type="SMART" id="SM00958">
    <property type="entry name" value="SecA_PP_bind"/>
    <property type="match status" value="1"/>
</dbReference>
<dbReference type="SUPFAM" id="SSF81886">
    <property type="entry name" value="Helical scaffold and wing domains of SecA"/>
    <property type="match status" value="1"/>
</dbReference>
<dbReference type="SUPFAM" id="SSF52540">
    <property type="entry name" value="P-loop containing nucleoside triphosphate hydrolases"/>
    <property type="match status" value="2"/>
</dbReference>
<dbReference type="SUPFAM" id="SSF81767">
    <property type="entry name" value="Pre-protein crosslinking domain of SecA"/>
    <property type="match status" value="1"/>
</dbReference>
<dbReference type="PROSITE" id="PS01312">
    <property type="entry name" value="SECA"/>
    <property type="match status" value="1"/>
</dbReference>
<dbReference type="PROSITE" id="PS51196">
    <property type="entry name" value="SECA_MOTOR_DEAD"/>
    <property type="match status" value="1"/>
</dbReference>
<gene>
    <name evidence="1" type="primary">secA</name>
    <name type="ordered locus">BMA2540</name>
</gene>
<reference key="1">
    <citation type="journal article" date="2004" name="Proc. Natl. Acad. Sci. U.S.A.">
        <title>Structural flexibility in the Burkholderia mallei genome.</title>
        <authorList>
            <person name="Nierman W.C."/>
            <person name="DeShazer D."/>
            <person name="Kim H.S."/>
            <person name="Tettelin H."/>
            <person name="Nelson K.E."/>
            <person name="Feldblyum T.V."/>
            <person name="Ulrich R.L."/>
            <person name="Ronning C.M."/>
            <person name="Brinkac L.M."/>
            <person name="Daugherty S.C."/>
            <person name="Davidsen T.D."/>
            <person name="DeBoy R.T."/>
            <person name="Dimitrov G."/>
            <person name="Dodson R.J."/>
            <person name="Durkin A.S."/>
            <person name="Gwinn M.L."/>
            <person name="Haft D.H."/>
            <person name="Khouri H.M."/>
            <person name="Kolonay J.F."/>
            <person name="Madupu R."/>
            <person name="Mohammoud Y."/>
            <person name="Nelson W.C."/>
            <person name="Radune D."/>
            <person name="Romero C.M."/>
            <person name="Sarria S."/>
            <person name="Selengut J."/>
            <person name="Shamblin C."/>
            <person name="Sullivan S.A."/>
            <person name="White O."/>
            <person name="Yu Y."/>
            <person name="Zafar N."/>
            <person name="Zhou L."/>
            <person name="Fraser C.M."/>
        </authorList>
    </citation>
    <scope>NUCLEOTIDE SEQUENCE [LARGE SCALE GENOMIC DNA]</scope>
    <source>
        <strain>ATCC 23344</strain>
    </source>
</reference>
<protein>
    <recommendedName>
        <fullName evidence="1">Protein translocase subunit SecA</fullName>
        <ecNumber evidence="1">7.4.2.8</ecNumber>
    </recommendedName>
</protein>
<keyword id="KW-0067">ATP-binding</keyword>
<keyword id="KW-0997">Cell inner membrane</keyword>
<keyword id="KW-1003">Cell membrane</keyword>
<keyword id="KW-0963">Cytoplasm</keyword>
<keyword id="KW-0472">Membrane</keyword>
<keyword id="KW-0479">Metal-binding</keyword>
<keyword id="KW-0547">Nucleotide-binding</keyword>
<keyword id="KW-0653">Protein transport</keyword>
<keyword id="KW-1185">Reference proteome</keyword>
<keyword id="KW-1278">Translocase</keyword>
<keyword id="KW-0811">Translocation</keyword>
<keyword id="KW-0813">Transport</keyword>
<keyword id="KW-0862">Zinc</keyword>
<sequence length="931" mass="104385">MTTGFLQKIFGSRNQRLVKQYQKTVAAINALETQIETLTDDQLRGKTGEFRQRIAAGESLDKLLPEAFAVCREASRRVLKMRHFDVQMIGGMVLHYGKIAEMRTGEGKTLVATLAAYLNALAGRGVHVVTVNDYLAQRDAEWMGRLYNFLGLSVGINLSGMEHDQKQAAYAADITYGTNNEFGFDYLRDNMVYETDSRVQRPLNFAVVDEVDSILIDEARTPLIISGQAEDHTELYVRMNALPPLLERQIGEEKADGTGVEKPGDYTLDEKGRQVFLTESGHEKAERMLAEWGLIGDGESLYAPQNITLMHHVYAALRAHTLFHRDQHYVVQNDEVIIVDEFTGRLMPGRRWSDGLHQAVEAKEHVKIQSENQTLASITFQNYFRMYAKLSGMTGTADTEAYEFNEIYGLETVVIPTNRPPKRIDKQDQIYKTAKERYDAVIRDIRECHERGQPVLVGTTSIENSELLSHLLKQAGLPHEVLNAKQHAREAAIVAEAGRPKRITIATNMAGRGTDIVLGGNVEKQAAFIEADESIPADEKARRIQQLHDEWETLHEQVKTAGGLHIIGTERHESRRIDNQLRGRAGRQGDPGSSRFYLSLEDPLLRIFAGDRVRAIMDRLKMPEGEAIEAGIVTRSIESAQRKVEARNFDIRKQLLEYDDVSNDQRKVIYQQRNELLEAHDIAETIGAMRHGVISEVVRQFVPAGSIEEQWDLPELEETLRNDWQLDLAIQEMVNESSSINADEILDAVTTAADEHYEAKVALVGRESFSAFERSIMLQTLDRLWREHLAALDHLRQGIHLRGYAQKNPKQEYKREAFELFAAMLDAVKQEVTRIVMNVQIQSPEQLEEAAEQIEEQGGQLGNVEFQHADFAAAAAAATAGGAVVADATAEMVGHAMSHSGPAGEVPRVGRNDPCPCGSGKKYKHCHGKLN</sequence>
<name>SECA_BURMA</name>
<evidence type="ECO:0000255" key="1">
    <source>
        <dbReference type="HAMAP-Rule" id="MF_01382"/>
    </source>
</evidence>
<feature type="chain" id="PRO_0000320749" description="Protein translocase subunit SecA">
    <location>
        <begin position="1"/>
        <end position="931"/>
    </location>
</feature>
<feature type="binding site" evidence="1">
    <location>
        <position position="87"/>
    </location>
    <ligand>
        <name>ATP</name>
        <dbReference type="ChEBI" id="CHEBI:30616"/>
    </ligand>
</feature>
<feature type="binding site" evidence="1">
    <location>
        <begin position="105"/>
        <end position="109"/>
    </location>
    <ligand>
        <name>ATP</name>
        <dbReference type="ChEBI" id="CHEBI:30616"/>
    </ligand>
</feature>
<feature type="binding site" evidence="1">
    <location>
        <position position="515"/>
    </location>
    <ligand>
        <name>ATP</name>
        <dbReference type="ChEBI" id="CHEBI:30616"/>
    </ligand>
</feature>
<feature type="binding site" evidence="1">
    <location>
        <position position="915"/>
    </location>
    <ligand>
        <name>Zn(2+)</name>
        <dbReference type="ChEBI" id="CHEBI:29105"/>
    </ligand>
</feature>
<feature type="binding site" evidence="1">
    <location>
        <position position="917"/>
    </location>
    <ligand>
        <name>Zn(2+)</name>
        <dbReference type="ChEBI" id="CHEBI:29105"/>
    </ligand>
</feature>
<feature type="binding site" evidence="1">
    <location>
        <position position="926"/>
    </location>
    <ligand>
        <name>Zn(2+)</name>
        <dbReference type="ChEBI" id="CHEBI:29105"/>
    </ligand>
</feature>
<feature type="binding site" evidence="1">
    <location>
        <position position="927"/>
    </location>
    <ligand>
        <name>Zn(2+)</name>
        <dbReference type="ChEBI" id="CHEBI:29105"/>
    </ligand>
</feature>
<organism>
    <name type="scientific">Burkholderia mallei (strain ATCC 23344)</name>
    <dbReference type="NCBI Taxonomy" id="243160"/>
    <lineage>
        <taxon>Bacteria</taxon>
        <taxon>Pseudomonadati</taxon>
        <taxon>Pseudomonadota</taxon>
        <taxon>Betaproteobacteria</taxon>
        <taxon>Burkholderiales</taxon>
        <taxon>Burkholderiaceae</taxon>
        <taxon>Burkholderia</taxon>
        <taxon>pseudomallei group</taxon>
    </lineage>
</organism>
<proteinExistence type="inferred from homology"/>